<feature type="chain" id="PRO_0000397687" description="E3 ubiquitin-protein ligase Os04g0590900">
    <location>
        <begin position="1"/>
        <end position="383"/>
    </location>
</feature>
<feature type="transmembrane region" description="Helical" evidence="2">
    <location>
        <begin position="53"/>
        <end position="73"/>
    </location>
</feature>
<feature type="zinc finger region" description="RING-type; atypical" evidence="3">
    <location>
        <begin position="157"/>
        <end position="199"/>
    </location>
</feature>
<feature type="region of interest" description="Disordered" evidence="4">
    <location>
        <begin position="105"/>
        <end position="129"/>
    </location>
</feature>
<feature type="region of interest" description="Disordered" evidence="4">
    <location>
        <begin position="269"/>
        <end position="291"/>
    </location>
</feature>
<feature type="region of interest" description="Disordered" evidence="4">
    <location>
        <begin position="320"/>
        <end position="383"/>
    </location>
</feature>
<feature type="sequence conflict" description="In Ref. 6; AK066752." evidence="6" ref="6">
    <original>S</original>
    <variation>P</variation>
    <location>
        <position position="288"/>
    </location>
</feature>
<proteinExistence type="evidence at transcript level"/>
<keyword id="KW-0472">Membrane</keyword>
<keyword id="KW-0479">Metal-binding</keyword>
<keyword id="KW-1185">Reference proteome</keyword>
<keyword id="KW-0808">Transferase</keyword>
<keyword id="KW-0812">Transmembrane</keyword>
<keyword id="KW-1133">Transmembrane helix</keyword>
<keyword id="KW-0833">Ubl conjugation pathway</keyword>
<keyword id="KW-0862">Zinc</keyword>
<keyword id="KW-0863">Zinc-finger</keyword>
<organism>
    <name type="scientific">Oryza sativa subsp. japonica</name>
    <name type="common">Rice</name>
    <dbReference type="NCBI Taxonomy" id="39947"/>
    <lineage>
        <taxon>Eukaryota</taxon>
        <taxon>Viridiplantae</taxon>
        <taxon>Streptophyta</taxon>
        <taxon>Embryophyta</taxon>
        <taxon>Tracheophyta</taxon>
        <taxon>Spermatophyta</taxon>
        <taxon>Magnoliopsida</taxon>
        <taxon>Liliopsida</taxon>
        <taxon>Poales</taxon>
        <taxon>Poaceae</taxon>
        <taxon>BOP clade</taxon>
        <taxon>Oryzoideae</taxon>
        <taxon>Oryzeae</taxon>
        <taxon>Oryzinae</taxon>
        <taxon>Oryza</taxon>
        <taxon>Oryza sativa</taxon>
    </lineage>
</organism>
<sequence length="383" mass="40680">MASSAPAWVPYEPTRDCSQGLCSMYCPQWCYFIFPPPPPFDVAGTSADDSSGPVFSPLVIAIIGVLASAFLLVSYYTFISKYCGTVSSLRGRVFGSSSGGAAYGGGAGSGGRHGHGQSRSHESWNVSPPSGLDETLINKITVCKYRRGDGFVHTTDCSVCLGEFSDGESLRLLPRCSHAFHQQCIDTWLKSHSNCPLCRANITFVTVGLASPEPEGCAPGETGGDNTHEVVVVMDGLENLCEEQQEAVSRASTADDDHDAKDVAEGMEEANGAAEIREEGSPPKRGASSFDLHRDNRMCIADVLQESMEDELTAARESGLLAGGAGTSRRCHGENSKGRGGRSRRALQLQDAMEALPGKRLPSGGRSCFSSKSGRGKDSDHPM</sequence>
<protein>
    <recommendedName>
        <fullName>E3 ubiquitin-protein ligase Os04g0590900</fullName>
        <ecNumber evidence="1">2.3.2.27</ecNumber>
    </recommendedName>
    <alternativeName>
        <fullName>RING-H2 finger protein Os04g0590900</fullName>
    </alternativeName>
    <alternativeName>
        <fullName evidence="6">RING-type E3 ubiquitin transferase Os04g0590900</fullName>
    </alternativeName>
</protein>
<evidence type="ECO:0000250" key="1">
    <source>
        <dbReference type="UniProtKB" id="Q9SLC3"/>
    </source>
</evidence>
<evidence type="ECO:0000255" key="2"/>
<evidence type="ECO:0000255" key="3">
    <source>
        <dbReference type="PROSITE-ProRule" id="PRU00175"/>
    </source>
</evidence>
<evidence type="ECO:0000256" key="4">
    <source>
        <dbReference type="SAM" id="MobiDB-lite"/>
    </source>
</evidence>
<evidence type="ECO:0000269" key="5">
    <source>
    </source>
</evidence>
<evidence type="ECO:0000305" key="6"/>
<comment type="function">
    <text evidence="5">Possesses E3 ubiquitin-protein ligase in vitro.</text>
</comment>
<comment type="catalytic activity">
    <reaction evidence="1">
        <text>S-ubiquitinyl-[E2 ubiquitin-conjugating enzyme]-L-cysteine + [acceptor protein]-L-lysine = [E2 ubiquitin-conjugating enzyme]-L-cysteine + N(6)-ubiquitinyl-[acceptor protein]-L-lysine.</text>
        <dbReference type="EC" id="2.3.2.27"/>
    </reaction>
</comment>
<comment type="pathway">
    <text>Protein modification; protein ubiquitination.</text>
</comment>
<comment type="subcellular location">
    <subcellularLocation>
        <location evidence="6">Membrane</location>
        <topology evidence="6">Single-pass membrane protein</topology>
    </subcellularLocation>
</comment>
<gene>
    <name type="ordered locus">Os04g0590900</name>
    <name type="ordered locus">LOC_Os04g50100</name>
    <name type="ORF">OsJ_15972</name>
    <name type="ORF">OSJNBa0086O06.21</name>
</gene>
<accession>Q7XLY8</accession>
<accession>A0A0P0WE68</accession>
<reference key="1">
    <citation type="journal article" date="2002" name="Nature">
        <title>Sequence and analysis of rice chromosome 4.</title>
        <authorList>
            <person name="Feng Q."/>
            <person name="Zhang Y."/>
            <person name="Hao P."/>
            <person name="Wang S."/>
            <person name="Fu G."/>
            <person name="Huang Y."/>
            <person name="Li Y."/>
            <person name="Zhu J."/>
            <person name="Liu Y."/>
            <person name="Hu X."/>
            <person name="Jia P."/>
            <person name="Zhang Y."/>
            <person name="Zhao Q."/>
            <person name="Ying K."/>
            <person name="Yu S."/>
            <person name="Tang Y."/>
            <person name="Weng Q."/>
            <person name="Zhang L."/>
            <person name="Lu Y."/>
            <person name="Mu J."/>
            <person name="Lu Y."/>
            <person name="Zhang L.S."/>
            <person name="Yu Z."/>
            <person name="Fan D."/>
            <person name="Liu X."/>
            <person name="Lu T."/>
            <person name="Li C."/>
            <person name="Wu Y."/>
            <person name="Sun T."/>
            <person name="Lei H."/>
            <person name="Li T."/>
            <person name="Hu H."/>
            <person name="Guan J."/>
            <person name="Wu M."/>
            <person name="Zhang R."/>
            <person name="Zhou B."/>
            <person name="Chen Z."/>
            <person name="Chen L."/>
            <person name="Jin Z."/>
            <person name="Wang R."/>
            <person name="Yin H."/>
            <person name="Cai Z."/>
            <person name="Ren S."/>
            <person name="Lv G."/>
            <person name="Gu W."/>
            <person name="Zhu G."/>
            <person name="Tu Y."/>
            <person name="Jia J."/>
            <person name="Zhang Y."/>
            <person name="Chen J."/>
            <person name="Kang H."/>
            <person name="Chen X."/>
            <person name="Shao C."/>
            <person name="Sun Y."/>
            <person name="Hu Q."/>
            <person name="Zhang X."/>
            <person name="Zhang W."/>
            <person name="Wang L."/>
            <person name="Ding C."/>
            <person name="Sheng H."/>
            <person name="Gu J."/>
            <person name="Chen S."/>
            <person name="Ni L."/>
            <person name="Zhu F."/>
            <person name="Chen W."/>
            <person name="Lan L."/>
            <person name="Lai Y."/>
            <person name="Cheng Z."/>
            <person name="Gu M."/>
            <person name="Jiang J."/>
            <person name="Li J."/>
            <person name="Hong G."/>
            <person name="Xue Y."/>
            <person name="Han B."/>
        </authorList>
    </citation>
    <scope>NUCLEOTIDE SEQUENCE [LARGE SCALE GENOMIC DNA]</scope>
    <source>
        <strain>cv. Nipponbare</strain>
    </source>
</reference>
<reference key="2">
    <citation type="journal article" date="2005" name="Nature">
        <title>The map-based sequence of the rice genome.</title>
        <authorList>
            <consortium name="International rice genome sequencing project (IRGSP)"/>
        </authorList>
    </citation>
    <scope>NUCLEOTIDE SEQUENCE [LARGE SCALE GENOMIC DNA]</scope>
    <source>
        <strain>cv. Nipponbare</strain>
    </source>
</reference>
<reference key="3">
    <citation type="journal article" date="2008" name="Nucleic Acids Res.">
        <title>The rice annotation project database (RAP-DB): 2008 update.</title>
        <authorList>
            <consortium name="The rice annotation project (RAP)"/>
        </authorList>
    </citation>
    <scope>GENOME REANNOTATION</scope>
    <source>
        <strain>cv. Nipponbare</strain>
    </source>
</reference>
<reference key="4">
    <citation type="journal article" date="2013" name="Rice">
        <title>Improvement of the Oryza sativa Nipponbare reference genome using next generation sequence and optical map data.</title>
        <authorList>
            <person name="Kawahara Y."/>
            <person name="de la Bastide M."/>
            <person name="Hamilton J.P."/>
            <person name="Kanamori H."/>
            <person name="McCombie W.R."/>
            <person name="Ouyang S."/>
            <person name="Schwartz D.C."/>
            <person name="Tanaka T."/>
            <person name="Wu J."/>
            <person name="Zhou S."/>
            <person name="Childs K.L."/>
            <person name="Davidson R.M."/>
            <person name="Lin H."/>
            <person name="Quesada-Ocampo L."/>
            <person name="Vaillancourt B."/>
            <person name="Sakai H."/>
            <person name="Lee S.S."/>
            <person name="Kim J."/>
            <person name="Numa H."/>
            <person name="Itoh T."/>
            <person name="Buell C.R."/>
            <person name="Matsumoto T."/>
        </authorList>
    </citation>
    <scope>GENOME REANNOTATION</scope>
    <source>
        <strain>cv. Nipponbare</strain>
    </source>
</reference>
<reference key="5">
    <citation type="journal article" date="2005" name="PLoS Biol.">
        <title>The genomes of Oryza sativa: a history of duplications.</title>
        <authorList>
            <person name="Yu J."/>
            <person name="Wang J."/>
            <person name="Lin W."/>
            <person name="Li S."/>
            <person name="Li H."/>
            <person name="Zhou J."/>
            <person name="Ni P."/>
            <person name="Dong W."/>
            <person name="Hu S."/>
            <person name="Zeng C."/>
            <person name="Zhang J."/>
            <person name="Zhang Y."/>
            <person name="Li R."/>
            <person name="Xu Z."/>
            <person name="Li S."/>
            <person name="Li X."/>
            <person name="Zheng H."/>
            <person name="Cong L."/>
            <person name="Lin L."/>
            <person name="Yin J."/>
            <person name="Geng J."/>
            <person name="Li G."/>
            <person name="Shi J."/>
            <person name="Liu J."/>
            <person name="Lv H."/>
            <person name="Li J."/>
            <person name="Wang J."/>
            <person name="Deng Y."/>
            <person name="Ran L."/>
            <person name="Shi X."/>
            <person name="Wang X."/>
            <person name="Wu Q."/>
            <person name="Li C."/>
            <person name="Ren X."/>
            <person name="Wang J."/>
            <person name="Wang X."/>
            <person name="Li D."/>
            <person name="Liu D."/>
            <person name="Zhang X."/>
            <person name="Ji Z."/>
            <person name="Zhao W."/>
            <person name="Sun Y."/>
            <person name="Zhang Z."/>
            <person name="Bao J."/>
            <person name="Han Y."/>
            <person name="Dong L."/>
            <person name="Ji J."/>
            <person name="Chen P."/>
            <person name="Wu S."/>
            <person name="Liu J."/>
            <person name="Xiao Y."/>
            <person name="Bu D."/>
            <person name="Tan J."/>
            <person name="Yang L."/>
            <person name="Ye C."/>
            <person name="Zhang J."/>
            <person name="Xu J."/>
            <person name="Zhou Y."/>
            <person name="Yu Y."/>
            <person name="Zhang B."/>
            <person name="Zhuang S."/>
            <person name="Wei H."/>
            <person name="Liu B."/>
            <person name="Lei M."/>
            <person name="Yu H."/>
            <person name="Li Y."/>
            <person name="Xu H."/>
            <person name="Wei S."/>
            <person name="He X."/>
            <person name="Fang L."/>
            <person name="Zhang Z."/>
            <person name="Zhang Y."/>
            <person name="Huang X."/>
            <person name="Su Z."/>
            <person name="Tong W."/>
            <person name="Li J."/>
            <person name="Tong Z."/>
            <person name="Li S."/>
            <person name="Ye J."/>
            <person name="Wang L."/>
            <person name="Fang L."/>
            <person name="Lei T."/>
            <person name="Chen C.-S."/>
            <person name="Chen H.-C."/>
            <person name="Xu Z."/>
            <person name="Li H."/>
            <person name="Huang H."/>
            <person name="Zhang F."/>
            <person name="Xu H."/>
            <person name="Li N."/>
            <person name="Zhao C."/>
            <person name="Li S."/>
            <person name="Dong L."/>
            <person name="Huang Y."/>
            <person name="Li L."/>
            <person name="Xi Y."/>
            <person name="Qi Q."/>
            <person name="Li W."/>
            <person name="Zhang B."/>
            <person name="Hu W."/>
            <person name="Zhang Y."/>
            <person name="Tian X."/>
            <person name="Jiao Y."/>
            <person name="Liang X."/>
            <person name="Jin J."/>
            <person name="Gao L."/>
            <person name="Zheng W."/>
            <person name="Hao B."/>
            <person name="Liu S.-M."/>
            <person name="Wang W."/>
            <person name="Yuan L."/>
            <person name="Cao M."/>
            <person name="McDermott J."/>
            <person name="Samudrala R."/>
            <person name="Wang J."/>
            <person name="Wong G.K.-S."/>
            <person name="Yang H."/>
        </authorList>
    </citation>
    <scope>NUCLEOTIDE SEQUENCE [LARGE SCALE GENOMIC DNA]</scope>
    <source>
        <strain>cv. Nipponbare</strain>
    </source>
</reference>
<reference key="6">
    <citation type="journal article" date="2003" name="Science">
        <title>Collection, mapping, and annotation of over 28,000 cDNA clones from japonica rice.</title>
        <authorList>
            <consortium name="The rice full-length cDNA consortium"/>
        </authorList>
    </citation>
    <scope>NUCLEOTIDE SEQUENCE [LARGE SCALE MRNA]</scope>
    <source>
        <strain>cv. Nipponbare</strain>
    </source>
</reference>
<reference key="7">
    <citation type="journal article" date="2005" name="J. Biol. Chem.">
        <title>Active site residues and amino acid specificity of the ubiquitin carrier protein-binding RING-H2 finger domain.</title>
        <authorList>
            <person name="Katoh S."/>
            <person name="Tsunoda Y."/>
            <person name="Murata K."/>
            <person name="Minami E."/>
            <person name="Katoh E."/>
        </authorList>
    </citation>
    <scope>FUNCTION</scope>
</reference>
<dbReference type="EC" id="2.3.2.27" evidence="1"/>
<dbReference type="EMBL" id="AL662981">
    <property type="protein sequence ID" value="CAE04873.2"/>
    <property type="molecule type" value="Genomic_DNA"/>
</dbReference>
<dbReference type="EMBL" id="AP008210">
    <property type="protein sequence ID" value="BAF15623.1"/>
    <property type="molecule type" value="Genomic_DNA"/>
</dbReference>
<dbReference type="EMBL" id="AP014960">
    <property type="protein sequence ID" value="BAS90750.1"/>
    <property type="molecule type" value="Genomic_DNA"/>
</dbReference>
<dbReference type="EMBL" id="CM000141">
    <property type="protein sequence ID" value="EAZ31814.1"/>
    <property type="molecule type" value="Genomic_DNA"/>
</dbReference>
<dbReference type="EMBL" id="AK066752">
    <property type="status" value="NOT_ANNOTATED_CDS"/>
    <property type="molecule type" value="mRNA"/>
</dbReference>
<dbReference type="RefSeq" id="XP_015637095.1">
    <property type="nucleotide sequence ID" value="XM_015781609.1"/>
</dbReference>
<dbReference type="SMR" id="Q7XLY8"/>
<dbReference type="FunCoup" id="Q7XLY8">
    <property type="interactions" value="1198"/>
</dbReference>
<dbReference type="STRING" id="39947.Q7XLY8"/>
<dbReference type="PaxDb" id="39947-Q7XLY8"/>
<dbReference type="EnsemblPlants" id="Os04t0590900-01">
    <property type="protein sequence ID" value="Os04t0590900-01"/>
    <property type="gene ID" value="Os04g0590900"/>
</dbReference>
<dbReference type="Gramene" id="Os04t0590900-01">
    <property type="protein sequence ID" value="Os04t0590900-01"/>
    <property type="gene ID" value="Os04g0590900"/>
</dbReference>
<dbReference type="KEGG" id="dosa:Os04g0590900"/>
<dbReference type="eggNOG" id="KOG0800">
    <property type="taxonomic scope" value="Eukaryota"/>
</dbReference>
<dbReference type="HOGENOM" id="CLU_040108_0_1_1"/>
<dbReference type="InParanoid" id="Q7XLY8"/>
<dbReference type="OMA" id="RYCGTFG"/>
<dbReference type="OrthoDB" id="9984778at2759"/>
<dbReference type="UniPathway" id="UPA00143"/>
<dbReference type="Proteomes" id="UP000000763">
    <property type="component" value="Chromosome 4"/>
</dbReference>
<dbReference type="Proteomes" id="UP000007752">
    <property type="component" value="Chromosome 4"/>
</dbReference>
<dbReference type="Proteomes" id="UP000059680">
    <property type="component" value="Chromosome 4"/>
</dbReference>
<dbReference type="GO" id="GO:0016020">
    <property type="term" value="C:membrane"/>
    <property type="evidence" value="ECO:0007669"/>
    <property type="project" value="UniProtKB-SubCell"/>
</dbReference>
<dbReference type="GO" id="GO:0004842">
    <property type="term" value="F:ubiquitin-protein transferase activity"/>
    <property type="evidence" value="ECO:0000314"/>
    <property type="project" value="UniProtKB"/>
</dbReference>
<dbReference type="GO" id="GO:0008270">
    <property type="term" value="F:zinc ion binding"/>
    <property type="evidence" value="ECO:0007669"/>
    <property type="project" value="UniProtKB-KW"/>
</dbReference>
<dbReference type="GO" id="GO:0016567">
    <property type="term" value="P:protein ubiquitination"/>
    <property type="evidence" value="ECO:0000314"/>
    <property type="project" value="UniProtKB"/>
</dbReference>
<dbReference type="CDD" id="cd16461">
    <property type="entry name" value="RING-H2_EL5-like"/>
    <property type="match status" value="1"/>
</dbReference>
<dbReference type="FunFam" id="3.30.40.10:FF:000233">
    <property type="entry name" value="RING-H2 finger protein ATL54"/>
    <property type="match status" value="1"/>
</dbReference>
<dbReference type="Gene3D" id="3.30.40.10">
    <property type="entry name" value="Zinc/RING finger domain, C3HC4 (zinc finger)"/>
    <property type="match status" value="1"/>
</dbReference>
<dbReference type="InterPro" id="IPR044600">
    <property type="entry name" value="ATL1/ATL16-like"/>
</dbReference>
<dbReference type="InterPro" id="IPR001841">
    <property type="entry name" value="Znf_RING"/>
</dbReference>
<dbReference type="InterPro" id="IPR013083">
    <property type="entry name" value="Znf_RING/FYVE/PHD"/>
</dbReference>
<dbReference type="PANTHER" id="PTHR46913">
    <property type="entry name" value="RING-H2 FINGER PROTEIN ATL16"/>
    <property type="match status" value="1"/>
</dbReference>
<dbReference type="PANTHER" id="PTHR46913:SF22">
    <property type="entry name" value="RING-TYPE E3 UBIQUITIN TRANSFERASE"/>
    <property type="match status" value="1"/>
</dbReference>
<dbReference type="Pfam" id="PF13639">
    <property type="entry name" value="zf-RING_2"/>
    <property type="match status" value="1"/>
</dbReference>
<dbReference type="SMART" id="SM00184">
    <property type="entry name" value="RING"/>
    <property type="match status" value="1"/>
</dbReference>
<dbReference type="SUPFAM" id="SSF57850">
    <property type="entry name" value="RING/U-box"/>
    <property type="match status" value="1"/>
</dbReference>
<dbReference type="PROSITE" id="PS50089">
    <property type="entry name" value="ZF_RING_2"/>
    <property type="match status" value="1"/>
</dbReference>
<name>ATL41_ORYSJ</name>